<name>PANC_STAAB</name>
<evidence type="ECO:0000255" key="1">
    <source>
        <dbReference type="HAMAP-Rule" id="MF_00158"/>
    </source>
</evidence>
<reference key="1">
    <citation type="journal article" date="2007" name="PLoS ONE">
        <title>Molecular correlates of host specialization in Staphylococcus aureus.</title>
        <authorList>
            <person name="Herron-Olson L."/>
            <person name="Fitzgerald J.R."/>
            <person name="Musser J.M."/>
            <person name="Kapur V."/>
        </authorList>
    </citation>
    <scope>NUCLEOTIDE SEQUENCE [LARGE SCALE GENOMIC DNA]</scope>
    <source>
        <strain>bovine RF122 / ET3-1</strain>
    </source>
</reference>
<organism>
    <name type="scientific">Staphylococcus aureus (strain bovine RF122 / ET3-1)</name>
    <dbReference type="NCBI Taxonomy" id="273036"/>
    <lineage>
        <taxon>Bacteria</taxon>
        <taxon>Bacillati</taxon>
        <taxon>Bacillota</taxon>
        <taxon>Bacilli</taxon>
        <taxon>Bacillales</taxon>
        <taxon>Staphylococcaceae</taxon>
        <taxon>Staphylococcus</taxon>
    </lineage>
</organism>
<sequence length="283" mass="31413">MTKLITTVKEMQHIVKAAKRSGTTIGLIPTMGALHDGHLTMVRESVSTNDITVVSVFVNPLQFGPNEDFDAYPRQIDKDLELVSEVGADIVFHPAVEDMYPGELGIDVKVGPLADVLEGAKRPGHFDGVVTVVNKLFNIVMPDYAYFGKKDAQQLAIVEQMVKDFNHAVEIIGIDIVREADGLAKSSRNVYLTEQERQEAVHLSKSLLLAQALYQDGERQSKVIIDRVTQYLESHISGRIEEVAVYSYPQLVEQHEITGRIFISLAVKFSKARLIDNIIIGAE</sequence>
<protein>
    <recommendedName>
        <fullName evidence="1">Pantothenate synthetase</fullName>
        <shortName evidence="1">PS</shortName>
        <ecNumber evidence="1">6.3.2.1</ecNumber>
    </recommendedName>
    <alternativeName>
        <fullName evidence="1">Pantoate--beta-alanine ligase</fullName>
    </alternativeName>
    <alternativeName>
        <fullName evidence="1">Pantoate-activating enzyme</fullName>
    </alternativeName>
</protein>
<proteinExistence type="inferred from homology"/>
<accession>Q2YWG0</accession>
<feature type="chain" id="PRO_0000305559" description="Pantothenate synthetase">
    <location>
        <begin position="1"/>
        <end position="283"/>
    </location>
</feature>
<feature type="active site" description="Proton donor" evidence="1">
    <location>
        <position position="38"/>
    </location>
</feature>
<feature type="binding site" evidence="1">
    <location>
        <begin position="31"/>
        <end position="38"/>
    </location>
    <ligand>
        <name>ATP</name>
        <dbReference type="ChEBI" id="CHEBI:30616"/>
    </ligand>
</feature>
<feature type="binding site" evidence="1">
    <location>
        <position position="62"/>
    </location>
    <ligand>
        <name>(R)-pantoate</name>
        <dbReference type="ChEBI" id="CHEBI:15980"/>
    </ligand>
</feature>
<feature type="binding site" evidence="1">
    <location>
        <position position="62"/>
    </location>
    <ligand>
        <name>beta-alanine</name>
        <dbReference type="ChEBI" id="CHEBI:57966"/>
    </ligand>
</feature>
<feature type="binding site" evidence="1">
    <location>
        <begin position="148"/>
        <end position="151"/>
    </location>
    <ligand>
        <name>ATP</name>
        <dbReference type="ChEBI" id="CHEBI:30616"/>
    </ligand>
</feature>
<feature type="binding site" evidence="1">
    <location>
        <position position="154"/>
    </location>
    <ligand>
        <name>(R)-pantoate</name>
        <dbReference type="ChEBI" id="CHEBI:15980"/>
    </ligand>
</feature>
<feature type="binding site" evidence="1">
    <location>
        <position position="177"/>
    </location>
    <ligand>
        <name>ATP</name>
        <dbReference type="ChEBI" id="CHEBI:30616"/>
    </ligand>
</feature>
<feature type="binding site" evidence="1">
    <location>
        <begin position="185"/>
        <end position="188"/>
    </location>
    <ligand>
        <name>ATP</name>
        <dbReference type="ChEBI" id="CHEBI:30616"/>
    </ligand>
</feature>
<comment type="function">
    <text evidence="1">Catalyzes the condensation of pantoate with beta-alanine in an ATP-dependent reaction via a pantoyl-adenylate intermediate.</text>
</comment>
<comment type="catalytic activity">
    <reaction evidence="1">
        <text>(R)-pantoate + beta-alanine + ATP = (R)-pantothenate + AMP + diphosphate + H(+)</text>
        <dbReference type="Rhea" id="RHEA:10912"/>
        <dbReference type="ChEBI" id="CHEBI:15378"/>
        <dbReference type="ChEBI" id="CHEBI:15980"/>
        <dbReference type="ChEBI" id="CHEBI:29032"/>
        <dbReference type="ChEBI" id="CHEBI:30616"/>
        <dbReference type="ChEBI" id="CHEBI:33019"/>
        <dbReference type="ChEBI" id="CHEBI:57966"/>
        <dbReference type="ChEBI" id="CHEBI:456215"/>
        <dbReference type="EC" id="6.3.2.1"/>
    </reaction>
</comment>
<comment type="pathway">
    <text evidence="1">Cofactor biosynthesis; (R)-pantothenate biosynthesis; (R)-pantothenate from (R)-pantoate and beta-alanine: step 1/1.</text>
</comment>
<comment type="subunit">
    <text evidence="1">Homodimer.</text>
</comment>
<comment type="subcellular location">
    <subcellularLocation>
        <location evidence="1">Cytoplasm</location>
    </subcellularLocation>
</comment>
<comment type="miscellaneous">
    <text evidence="1">The reaction proceeds by a bi uni uni bi ping pong mechanism.</text>
</comment>
<comment type="similarity">
    <text evidence="1">Belongs to the pantothenate synthetase family.</text>
</comment>
<dbReference type="EC" id="6.3.2.1" evidence="1"/>
<dbReference type="EMBL" id="AJ938182">
    <property type="protein sequence ID" value="CAI82159.1"/>
    <property type="molecule type" value="Genomic_DNA"/>
</dbReference>
<dbReference type="RefSeq" id="WP_000163751.1">
    <property type="nucleotide sequence ID" value="NC_007622.1"/>
</dbReference>
<dbReference type="SMR" id="Q2YWG0"/>
<dbReference type="KEGG" id="sab:SAB2471c"/>
<dbReference type="HOGENOM" id="CLU_047148_0_0_9"/>
<dbReference type="UniPathway" id="UPA00028">
    <property type="reaction ID" value="UER00005"/>
</dbReference>
<dbReference type="GO" id="GO:0005829">
    <property type="term" value="C:cytosol"/>
    <property type="evidence" value="ECO:0007669"/>
    <property type="project" value="TreeGrafter"/>
</dbReference>
<dbReference type="GO" id="GO:0005524">
    <property type="term" value="F:ATP binding"/>
    <property type="evidence" value="ECO:0007669"/>
    <property type="project" value="UniProtKB-KW"/>
</dbReference>
<dbReference type="GO" id="GO:0004592">
    <property type="term" value="F:pantoate-beta-alanine ligase activity"/>
    <property type="evidence" value="ECO:0007669"/>
    <property type="project" value="UniProtKB-UniRule"/>
</dbReference>
<dbReference type="GO" id="GO:0015940">
    <property type="term" value="P:pantothenate biosynthetic process"/>
    <property type="evidence" value="ECO:0007669"/>
    <property type="project" value="UniProtKB-UniRule"/>
</dbReference>
<dbReference type="CDD" id="cd00560">
    <property type="entry name" value="PanC"/>
    <property type="match status" value="1"/>
</dbReference>
<dbReference type="FunFam" id="3.30.1300.10:FF:000001">
    <property type="entry name" value="Pantothenate synthetase"/>
    <property type="match status" value="1"/>
</dbReference>
<dbReference type="FunFam" id="3.40.50.620:FF:000013">
    <property type="entry name" value="Pantothenate synthetase"/>
    <property type="match status" value="1"/>
</dbReference>
<dbReference type="Gene3D" id="3.40.50.620">
    <property type="entry name" value="HUPs"/>
    <property type="match status" value="1"/>
</dbReference>
<dbReference type="Gene3D" id="3.30.1300.10">
    <property type="entry name" value="Pantoate-beta-alanine ligase, C-terminal domain"/>
    <property type="match status" value="1"/>
</dbReference>
<dbReference type="HAMAP" id="MF_00158">
    <property type="entry name" value="PanC"/>
    <property type="match status" value="1"/>
</dbReference>
<dbReference type="InterPro" id="IPR003721">
    <property type="entry name" value="Pantoate_ligase"/>
</dbReference>
<dbReference type="InterPro" id="IPR042176">
    <property type="entry name" value="Pantoate_ligase_C"/>
</dbReference>
<dbReference type="InterPro" id="IPR014729">
    <property type="entry name" value="Rossmann-like_a/b/a_fold"/>
</dbReference>
<dbReference type="NCBIfam" id="TIGR00018">
    <property type="entry name" value="panC"/>
    <property type="match status" value="1"/>
</dbReference>
<dbReference type="PANTHER" id="PTHR21299">
    <property type="entry name" value="CYTIDYLATE KINASE/PANTOATE-BETA-ALANINE LIGASE"/>
    <property type="match status" value="1"/>
</dbReference>
<dbReference type="PANTHER" id="PTHR21299:SF1">
    <property type="entry name" value="PANTOATE--BETA-ALANINE LIGASE"/>
    <property type="match status" value="1"/>
</dbReference>
<dbReference type="Pfam" id="PF02569">
    <property type="entry name" value="Pantoate_ligase"/>
    <property type="match status" value="1"/>
</dbReference>
<dbReference type="SUPFAM" id="SSF52374">
    <property type="entry name" value="Nucleotidylyl transferase"/>
    <property type="match status" value="1"/>
</dbReference>
<gene>
    <name evidence="1" type="primary">panC</name>
    <name type="ordered locus">SAB2471c</name>
</gene>
<keyword id="KW-0067">ATP-binding</keyword>
<keyword id="KW-0963">Cytoplasm</keyword>
<keyword id="KW-0436">Ligase</keyword>
<keyword id="KW-0547">Nucleotide-binding</keyword>
<keyword id="KW-0566">Pantothenate biosynthesis</keyword>